<gene>
    <name type="primary">Rpl18a</name>
</gene>
<dbReference type="EMBL" id="X14181">
    <property type="protein sequence ID" value="CAA32385.1"/>
    <property type="molecule type" value="mRNA"/>
</dbReference>
<dbReference type="EMBL" id="BC058498">
    <property type="protein sequence ID" value="AAH58498.1"/>
    <property type="molecule type" value="mRNA"/>
</dbReference>
<dbReference type="PIR" id="JC4231">
    <property type="entry name" value="R5RT18"/>
</dbReference>
<dbReference type="RefSeq" id="NP_997675.1">
    <property type="nucleotide sequence ID" value="NM_212510.3"/>
</dbReference>
<dbReference type="PDB" id="7QGG">
    <property type="method" value="EM"/>
    <property type="resolution" value="2.86 A"/>
    <property type="chains" value="T=1-176"/>
</dbReference>
<dbReference type="PDBsum" id="7QGG"/>
<dbReference type="EMDB" id="EMD-13954"/>
<dbReference type="SMR" id="P62718"/>
<dbReference type="BioGRID" id="253263">
    <property type="interactions" value="3"/>
</dbReference>
<dbReference type="FunCoup" id="P62718">
    <property type="interactions" value="2811"/>
</dbReference>
<dbReference type="IntAct" id="P62718">
    <property type="interactions" value="3"/>
</dbReference>
<dbReference type="STRING" id="10116.ENSRNOP00000025421"/>
<dbReference type="iPTMnet" id="P62718"/>
<dbReference type="PhosphoSitePlus" id="P62718"/>
<dbReference type="jPOST" id="P62718"/>
<dbReference type="PaxDb" id="10116-ENSRNOP00000025421"/>
<dbReference type="Ensembl" id="ENSRNOT00000025421.7">
    <property type="protein sequence ID" value="ENSRNOP00000025421.4"/>
    <property type="gene ID" value="ENSRNOG00000018795.7"/>
</dbReference>
<dbReference type="GeneID" id="290641"/>
<dbReference type="KEGG" id="rno:290641"/>
<dbReference type="UCSC" id="RGD:1302976">
    <property type="organism name" value="rat"/>
</dbReference>
<dbReference type="AGR" id="RGD:1302976"/>
<dbReference type="CTD" id="6142"/>
<dbReference type="RGD" id="1302976">
    <property type="gene designation" value="Rpl18a"/>
</dbReference>
<dbReference type="eggNOG" id="KOG0829">
    <property type="taxonomic scope" value="Eukaryota"/>
</dbReference>
<dbReference type="GeneTree" id="ENSGT00390000015797"/>
<dbReference type="HOGENOM" id="CLU_080773_2_0_1"/>
<dbReference type="InParanoid" id="P62718"/>
<dbReference type="OrthoDB" id="1591at9989"/>
<dbReference type="PhylomeDB" id="P62718"/>
<dbReference type="Reactome" id="R-RNO-156827">
    <property type="pathway name" value="L13a-mediated translational silencing of Ceruloplasmin expression"/>
</dbReference>
<dbReference type="Reactome" id="R-RNO-1799339">
    <property type="pathway name" value="SRP-dependent cotranslational protein targeting to membrane"/>
</dbReference>
<dbReference type="Reactome" id="R-RNO-6791226">
    <property type="pathway name" value="Major pathway of rRNA processing in the nucleolus and cytosol"/>
</dbReference>
<dbReference type="Reactome" id="R-RNO-72689">
    <property type="pathway name" value="Formation of a pool of free 40S subunits"/>
</dbReference>
<dbReference type="Reactome" id="R-RNO-72706">
    <property type="pathway name" value="GTP hydrolysis and joining of the 60S ribosomal subunit"/>
</dbReference>
<dbReference type="Reactome" id="R-RNO-975956">
    <property type="pathway name" value="Nonsense Mediated Decay (NMD) independent of the Exon Junction Complex (EJC)"/>
</dbReference>
<dbReference type="Reactome" id="R-RNO-975957">
    <property type="pathway name" value="Nonsense Mediated Decay (NMD) enhanced by the Exon Junction Complex (EJC)"/>
</dbReference>
<dbReference type="PRO" id="PR:P62718"/>
<dbReference type="Proteomes" id="UP000002494">
    <property type="component" value="Chromosome 16"/>
</dbReference>
<dbReference type="Bgee" id="ENSRNOG00000018795">
    <property type="expression patterns" value="Expressed in ovary and 20 other cell types or tissues"/>
</dbReference>
<dbReference type="GO" id="GO:0005737">
    <property type="term" value="C:cytoplasm"/>
    <property type="evidence" value="ECO:0000266"/>
    <property type="project" value="RGD"/>
</dbReference>
<dbReference type="GO" id="GO:0022625">
    <property type="term" value="C:cytosolic large ribosomal subunit"/>
    <property type="evidence" value="ECO:0000314"/>
    <property type="project" value="RGD"/>
</dbReference>
<dbReference type="GO" id="GO:0022626">
    <property type="term" value="C:cytosolic ribosome"/>
    <property type="evidence" value="ECO:0000266"/>
    <property type="project" value="RGD"/>
</dbReference>
<dbReference type="GO" id="GO:0014069">
    <property type="term" value="C:postsynaptic density"/>
    <property type="evidence" value="ECO:0000314"/>
    <property type="project" value="SynGO"/>
</dbReference>
<dbReference type="GO" id="GO:0005840">
    <property type="term" value="C:ribosome"/>
    <property type="evidence" value="ECO:0000314"/>
    <property type="project" value="RGD"/>
</dbReference>
<dbReference type="GO" id="GO:0045202">
    <property type="term" value="C:synapse"/>
    <property type="evidence" value="ECO:0000314"/>
    <property type="project" value="SynGO"/>
</dbReference>
<dbReference type="GO" id="GO:0003735">
    <property type="term" value="F:structural constituent of ribosome"/>
    <property type="evidence" value="ECO:0000266"/>
    <property type="project" value="RGD"/>
</dbReference>
<dbReference type="GO" id="GO:0002181">
    <property type="term" value="P:cytoplasmic translation"/>
    <property type="evidence" value="ECO:0000266"/>
    <property type="project" value="RGD"/>
</dbReference>
<dbReference type="GO" id="GO:0097327">
    <property type="term" value="P:response to antineoplastic agent"/>
    <property type="evidence" value="ECO:0000270"/>
    <property type="project" value="RGD"/>
</dbReference>
<dbReference type="FunFam" id="3.10.20.10:FF:000001">
    <property type="entry name" value="60S ribosomal protein L18a"/>
    <property type="match status" value="1"/>
</dbReference>
<dbReference type="FunFam" id="3.10.20.10:FF:000002">
    <property type="entry name" value="60S ribosomal protein L18a"/>
    <property type="match status" value="1"/>
</dbReference>
<dbReference type="Gene3D" id="3.10.20.10">
    <property type="match status" value="2"/>
</dbReference>
<dbReference type="HAMAP" id="MF_00273">
    <property type="entry name" value="Ribosomal_eL20"/>
    <property type="match status" value="1"/>
</dbReference>
<dbReference type="InterPro" id="IPR028877">
    <property type="entry name" value="Ribosomal_eL20"/>
</dbReference>
<dbReference type="InterPro" id="IPR023573">
    <property type="entry name" value="Ribosomal_eL20_dom"/>
</dbReference>
<dbReference type="InterPro" id="IPR021138">
    <property type="entry name" value="Ribosomal_eL20_eukaryotes"/>
</dbReference>
<dbReference type="PANTHER" id="PTHR10052">
    <property type="entry name" value="60S RIBOSOMAL PROTEIN L18A"/>
    <property type="match status" value="1"/>
</dbReference>
<dbReference type="Pfam" id="PF01775">
    <property type="entry name" value="Ribosomal_L18A"/>
    <property type="match status" value="1"/>
</dbReference>
<dbReference type="PIRSF" id="PIRSF002190">
    <property type="entry name" value="Ribosomal_L18a"/>
    <property type="match status" value="1"/>
</dbReference>
<dbReference type="SUPFAM" id="SSF160374">
    <property type="entry name" value="RplX-like"/>
    <property type="match status" value="1"/>
</dbReference>
<comment type="function">
    <text evidence="2">Component of the large ribosomal subunit. The ribosome is a large ribonucleoprotein complex responsible for the synthesis of proteins in the cell.</text>
</comment>
<comment type="subunit">
    <text evidence="2">Component of the large ribosomal subunit. Binds IPO9 with high affinity.</text>
</comment>
<comment type="subcellular location">
    <subcellularLocation>
        <location evidence="2">Cytoplasm</location>
    </subcellularLocation>
</comment>
<comment type="similarity">
    <text evidence="3">Belongs to the eukaryotic ribosomal protein eL20 family.</text>
</comment>
<protein>
    <recommendedName>
        <fullName evidence="3">Large ribosomal subunit protein eL20</fullName>
    </recommendedName>
    <alternativeName>
        <fullName>60S ribosomal protein L18a</fullName>
    </alternativeName>
</protein>
<accession>P62718</accession>
<accession>P11249</accession>
<sequence length="176" mass="20732">MKASGTLREYKVVGRCLPTPKCHTPPLYRMRIFAPNHVVAKSRFWYFVSQLKKMKKSSGEIVYCGQVFEKSPLRVKNFGIWLRYDSRSGTHNMYREYRDLTTAGAVTQCYRDMGARHRARAHSIQIMKVEEIAAGKCRRPAVKQFHDSKIKFPLPHRVLRRQHKPRFTTKRPNTFF</sequence>
<reference key="1">
    <citation type="journal article" date="1989" name="FEBS Lett.">
        <title>The primary structure of rat ribosomal protein L18a.</title>
        <authorList>
            <person name="Aoyama Y."/>
            <person name="Chan Y.-L."/>
            <person name="Meyuhas O."/>
            <person name="Wool I.G."/>
        </authorList>
    </citation>
    <scope>NUCLEOTIDE SEQUENCE [MRNA]</scope>
    <source>
        <strain>Sprague-Dawley</strain>
        <tissue>Liver</tissue>
    </source>
</reference>
<reference key="2">
    <citation type="journal article" date="1995" name="Biochem. Biophys. Res. Commun.">
        <title>The primary structures of rat ribosomal proteins: the characterization of the cDNAs for S21 and L39, corrections in the sequences of L7 and L18a, and the identification of L33.</title>
        <authorList>
            <person name="Chan Y.-L."/>
            <person name="Olvera J."/>
            <person name="Wool I.G."/>
        </authorList>
    </citation>
    <scope>SEQUENCE REVISION</scope>
</reference>
<reference key="3">
    <citation type="journal article" date="2004" name="Genome Res.">
        <title>The status, quality, and expansion of the NIH full-length cDNA project: the Mammalian Gene Collection (MGC).</title>
        <authorList>
            <consortium name="The MGC Project Team"/>
        </authorList>
    </citation>
    <scope>NUCLEOTIDE SEQUENCE [LARGE SCALE MRNA]</scope>
    <source>
        <tissue>Pituitary</tissue>
    </source>
</reference>
<feature type="chain" id="PRO_0000213927" description="Large ribosomal subunit protein eL20">
    <location>
        <begin position="1"/>
        <end position="176"/>
    </location>
</feature>
<feature type="modified residue" description="Phosphotyrosine" evidence="2">
    <location>
        <position position="63"/>
    </location>
</feature>
<feature type="modified residue" description="Phosphoserine" evidence="2">
    <location>
        <position position="71"/>
    </location>
</feature>
<feature type="modified residue" description="N6-succinyllysine" evidence="1">
    <location>
        <position position="76"/>
    </location>
</feature>
<feature type="modified residue" description="Phosphoserine" evidence="1">
    <location>
        <position position="123"/>
    </location>
</feature>
<feature type="cross-link" description="Glycyl lysine isopeptide (Lys-Gly) (interchain with G-Cter in SUMO2)" evidence="2">
    <location>
        <position position="11"/>
    </location>
</feature>
<feature type="cross-link" description="Glycyl lysine isopeptide (Lys-Gly) (interchain with G-Cter in SUMO2)" evidence="2">
    <location>
        <position position="128"/>
    </location>
</feature>
<feature type="cross-link" description="Glycyl lysine isopeptide (Lys-Gly) (interchain with G-Cter in SUMO2)" evidence="2">
    <location>
        <position position="170"/>
    </location>
</feature>
<keyword id="KW-0002">3D-structure</keyword>
<keyword id="KW-0963">Cytoplasm</keyword>
<keyword id="KW-1017">Isopeptide bond</keyword>
<keyword id="KW-0597">Phosphoprotein</keyword>
<keyword id="KW-1185">Reference proteome</keyword>
<keyword id="KW-0687">Ribonucleoprotein</keyword>
<keyword id="KW-0689">Ribosomal protein</keyword>
<keyword id="KW-0832">Ubl conjugation</keyword>
<organism>
    <name type="scientific">Rattus norvegicus</name>
    <name type="common">Rat</name>
    <dbReference type="NCBI Taxonomy" id="10116"/>
    <lineage>
        <taxon>Eukaryota</taxon>
        <taxon>Metazoa</taxon>
        <taxon>Chordata</taxon>
        <taxon>Craniata</taxon>
        <taxon>Vertebrata</taxon>
        <taxon>Euteleostomi</taxon>
        <taxon>Mammalia</taxon>
        <taxon>Eutheria</taxon>
        <taxon>Euarchontoglires</taxon>
        <taxon>Glires</taxon>
        <taxon>Rodentia</taxon>
        <taxon>Myomorpha</taxon>
        <taxon>Muroidea</taxon>
        <taxon>Muridae</taxon>
        <taxon>Murinae</taxon>
        <taxon>Rattus</taxon>
    </lineage>
</organism>
<evidence type="ECO:0000250" key="1">
    <source>
        <dbReference type="UniProtKB" id="P62717"/>
    </source>
</evidence>
<evidence type="ECO:0000250" key="2">
    <source>
        <dbReference type="UniProtKB" id="Q02543"/>
    </source>
</evidence>
<evidence type="ECO:0000305" key="3"/>
<proteinExistence type="evidence at protein level"/>
<name>RL18A_RAT</name>